<proteinExistence type="evidence at protein level"/>
<accession>P32527</accession>
<accession>D6VV62</accession>
<comment type="function">
    <text evidence="7 8">Component of the ribosome-associated complex (RAC), a heterodimeric chaperone complex involved in regulation of accurate translation termination and in folding or maintaining nascent polypeptides in a folding-competent state. RAC stimulates the ATPase activity of the ribosome-associated pool of Hsp70-type chaperones SSB1/SSB2 that bind to the nascent polypeptide chain. ZUO1 can act as a J-protein for SSB1/SSB2 only when associated with SSZ1.</text>
</comment>
<comment type="subunit">
    <text evidence="3">RAC is a heterodimer of the Hsp70/DnaK-type chaperone SSZ1 and the Hsp40/DnaJ-type chaperone ZUO1. RAC associates with ribosomes via ZUO1.</text>
</comment>
<comment type="interaction">
    <interactant intactId="EBI-29684">
        <id>P32527</id>
    </interactant>
    <interactant intactId="EBI-24570">
        <id>P38788</id>
        <label>SSZ1</label>
    </interactant>
    <organismsDiffer>false</organismsDiffer>
    <experiments>10</experiments>
</comment>
<comment type="subcellular location">
    <subcellularLocation>
        <location evidence="5">Cytoplasm</location>
    </subcellularLocation>
</comment>
<comment type="miscellaneous">
    <text evidence="6">Present with 86400 molecules/cell in log phase SD medium.</text>
</comment>
<keyword id="KW-0002">3D-structure</keyword>
<keyword id="KW-0143">Chaperone</keyword>
<keyword id="KW-0963">Cytoplasm</keyword>
<keyword id="KW-0903">Direct protein sequencing</keyword>
<keyword id="KW-0238">DNA-binding</keyword>
<keyword id="KW-0597">Phosphoprotein</keyword>
<keyword id="KW-1185">Reference proteome</keyword>
<reference key="1">
    <citation type="journal article" date="1992" name="EMBO J.">
        <title>Zuotin, a putative Z-DNA binding protein in Saccharomyces cerevisiae.</title>
        <authorList>
            <person name="Zhang S."/>
            <person name="Lockshin C."/>
            <person name="Herbert A."/>
            <person name="Winter E."/>
            <person name="Rich A."/>
        </authorList>
    </citation>
    <scope>NUCLEOTIDE SEQUENCE [GENOMIC DNA]</scope>
    <scope>PROTEIN SEQUENCE OF 1-10</scope>
    <source>
        <strain>20B-12</strain>
    </source>
</reference>
<reference key="2">
    <citation type="journal article" date="1997" name="Yeast">
        <title>Sequence analysis of a near-subtelomeric 35.4 kb DNA segment on the right arm of chromosome VII from Saccharomyces cerevisiae carrying the MAL1 locus reveals 15 complete open reading frames, including ZUO1, BGL2 and BIO2 genes and an ABC transporter gene.</title>
        <authorList>
            <person name="Volckaert G."/>
            <person name="Voet M."/>
            <person name="Robben J."/>
        </authorList>
    </citation>
    <scope>NUCLEOTIDE SEQUENCE [GENOMIC DNA]</scope>
    <source>
        <strain>ATCC 96604 / S288c / FY1679</strain>
    </source>
</reference>
<reference key="3">
    <citation type="journal article" date="1997" name="Nature">
        <title>The nucleotide sequence of Saccharomyces cerevisiae chromosome VII.</title>
        <authorList>
            <person name="Tettelin H."/>
            <person name="Agostoni-Carbone M.L."/>
            <person name="Albermann K."/>
            <person name="Albers M."/>
            <person name="Arroyo J."/>
            <person name="Backes U."/>
            <person name="Barreiros T."/>
            <person name="Bertani I."/>
            <person name="Bjourson A.J."/>
            <person name="Brueckner M."/>
            <person name="Bruschi C.V."/>
            <person name="Carignani G."/>
            <person name="Castagnoli L."/>
            <person name="Cerdan E."/>
            <person name="Clemente M.L."/>
            <person name="Coblenz A."/>
            <person name="Coglievina M."/>
            <person name="Coissac E."/>
            <person name="Defoor E."/>
            <person name="Del Bino S."/>
            <person name="Delius H."/>
            <person name="Delneri D."/>
            <person name="de Wergifosse P."/>
            <person name="Dujon B."/>
            <person name="Durand P."/>
            <person name="Entian K.-D."/>
            <person name="Eraso P."/>
            <person name="Escribano V."/>
            <person name="Fabiani L."/>
            <person name="Fartmann B."/>
            <person name="Feroli F."/>
            <person name="Feuermann M."/>
            <person name="Frontali L."/>
            <person name="Garcia-Gonzalez M."/>
            <person name="Garcia-Saez M.I."/>
            <person name="Goffeau A."/>
            <person name="Guerreiro P."/>
            <person name="Hani J."/>
            <person name="Hansen M."/>
            <person name="Hebling U."/>
            <person name="Hernandez K."/>
            <person name="Heumann K."/>
            <person name="Hilger F."/>
            <person name="Hofmann B."/>
            <person name="Indge K.J."/>
            <person name="James C.M."/>
            <person name="Klima R."/>
            <person name="Koetter P."/>
            <person name="Kramer B."/>
            <person name="Kramer W."/>
            <person name="Lauquin G."/>
            <person name="Leuther H."/>
            <person name="Louis E.J."/>
            <person name="Maillier E."/>
            <person name="Marconi A."/>
            <person name="Martegani E."/>
            <person name="Mazon M.J."/>
            <person name="Mazzoni C."/>
            <person name="McReynolds A.D.K."/>
            <person name="Melchioretto P."/>
            <person name="Mewes H.-W."/>
            <person name="Minenkova O."/>
            <person name="Mueller-Auer S."/>
            <person name="Nawrocki A."/>
            <person name="Netter P."/>
            <person name="Neu R."/>
            <person name="Nombela C."/>
            <person name="Oliver S.G."/>
            <person name="Panzeri L."/>
            <person name="Paoluzi S."/>
            <person name="Plevani P."/>
            <person name="Portetelle D."/>
            <person name="Portillo F."/>
            <person name="Potier S."/>
            <person name="Purnelle B."/>
            <person name="Rieger M."/>
            <person name="Riles L."/>
            <person name="Rinaldi T."/>
            <person name="Robben J."/>
            <person name="Rodrigues-Pousada C."/>
            <person name="Rodriguez-Belmonte E."/>
            <person name="Rodriguez-Torres A.M."/>
            <person name="Rose M."/>
            <person name="Ruzzi M."/>
            <person name="Saliola M."/>
            <person name="Sanchez-Perez M."/>
            <person name="Schaefer B."/>
            <person name="Schaefer M."/>
            <person name="Scharfe M."/>
            <person name="Schmidheini T."/>
            <person name="Schreer A."/>
            <person name="Skala J."/>
            <person name="Souciet J.-L."/>
            <person name="Steensma H.Y."/>
            <person name="Talla E."/>
            <person name="Thierry A."/>
            <person name="Vandenbol M."/>
            <person name="van der Aart Q.J.M."/>
            <person name="Van Dyck L."/>
            <person name="Vanoni M."/>
            <person name="Verhasselt P."/>
            <person name="Voet M."/>
            <person name="Volckaert G."/>
            <person name="Wambutt R."/>
            <person name="Watson M.D."/>
            <person name="Weber N."/>
            <person name="Wedler E."/>
            <person name="Wedler H."/>
            <person name="Wipfli P."/>
            <person name="Wolf K."/>
            <person name="Wright L.F."/>
            <person name="Zaccaria P."/>
            <person name="Zimmermann M."/>
            <person name="Zollner A."/>
            <person name="Kleine K."/>
        </authorList>
    </citation>
    <scope>NUCLEOTIDE SEQUENCE [LARGE SCALE GENOMIC DNA]</scope>
    <source>
        <strain>ATCC 204508 / S288c</strain>
    </source>
</reference>
<reference key="4">
    <citation type="journal article" date="2014" name="G3 (Bethesda)">
        <title>The reference genome sequence of Saccharomyces cerevisiae: Then and now.</title>
        <authorList>
            <person name="Engel S.R."/>
            <person name="Dietrich F.S."/>
            <person name="Fisk D.G."/>
            <person name="Binkley G."/>
            <person name="Balakrishnan R."/>
            <person name="Costanzo M.C."/>
            <person name="Dwight S.S."/>
            <person name="Hitz B.C."/>
            <person name="Karra K."/>
            <person name="Nash R.S."/>
            <person name="Weng S."/>
            <person name="Wong E.D."/>
            <person name="Lloyd P."/>
            <person name="Skrzypek M.S."/>
            <person name="Miyasato S.R."/>
            <person name="Simison M."/>
            <person name="Cherry J.M."/>
        </authorList>
    </citation>
    <scope>GENOME REANNOTATION</scope>
    <source>
        <strain>ATCC 204508 / S288c</strain>
    </source>
</reference>
<reference key="5">
    <citation type="journal article" date="2007" name="Genome Res.">
        <title>Approaching a complete repository of sequence-verified protein-encoding clones for Saccharomyces cerevisiae.</title>
        <authorList>
            <person name="Hu Y."/>
            <person name="Rolfs A."/>
            <person name="Bhullar B."/>
            <person name="Murthy T.V.S."/>
            <person name="Zhu C."/>
            <person name="Berger M.F."/>
            <person name="Camargo A.A."/>
            <person name="Kelley F."/>
            <person name="McCarron S."/>
            <person name="Jepson D."/>
            <person name="Richardson A."/>
            <person name="Raphael J."/>
            <person name="Moreira D."/>
            <person name="Taycher E."/>
            <person name="Zuo D."/>
            <person name="Mohr S."/>
            <person name="Kane M.F."/>
            <person name="Williamson J."/>
            <person name="Simpson A.J.G."/>
            <person name="Bulyk M.L."/>
            <person name="Harlow E."/>
            <person name="Marsischky G."/>
            <person name="Kolodner R.D."/>
            <person name="LaBaer J."/>
        </authorList>
    </citation>
    <scope>NUCLEOTIDE SEQUENCE [GENOMIC DNA]</scope>
    <source>
        <strain>ATCC 204508 / S288c</strain>
    </source>
</reference>
<reference key="6">
    <citation type="journal article" date="2000" name="Gene">
        <title>Yeast Pdr13p and Zuo1p molecular chaperones are new functional Hsp70 and Hsp40 partners.</title>
        <authorList>
            <person name="Michimoto T."/>
            <person name="Aoki T."/>
            <person name="Toh-e A."/>
            <person name="Kikuchi Y."/>
        </authorList>
    </citation>
    <scope>INTERACTION WITH SSZ1</scope>
</reference>
<reference key="7">
    <citation type="journal article" date="2001" name="Proc. Natl. Acad. Sci. U.S.A.">
        <title>RAC, a stable ribosome-associated complex in yeast formed by the DnaK-DnaJ homologs Ssz1p and zuotin.</title>
        <authorList>
            <person name="Gautschi M."/>
            <person name="Lilie H."/>
            <person name="Fuenfschilling U."/>
            <person name="Mun A."/>
            <person name="Ross S."/>
            <person name="Lithgow T."/>
            <person name="Ruecknagel P."/>
            <person name="Rospert S."/>
        </authorList>
    </citation>
    <scope>IDENTIFICATION IN RAC</scope>
</reference>
<reference key="8">
    <citation type="journal article" date="2002" name="Proc. Natl. Acad. Sci. U.S.A.">
        <title>A functional chaperone triad on the yeast ribosome.</title>
        <authorList>
            <person name="Gautschi M."/>
            <person name="Mun A."/>
            <person name="Ross S."/>
            <person name="Rospert S."/>
        </authorList>
    </citation>
    <scope>MUTAGENESIS OF HIS-128</scope>
</reference>
<reference key="9">
    <citation type="journal article" date="2003" name="Nature">
        <title>Global analysis of protein localization in budding yeast.</title>
        <authorList>
            <person name="Huh W.-K."/>
            <person name="Falvo J.V."/>
            <person name="Gerke L.C."/>
            <person name="Carroll A.S."/>
            <person name="Howson R.W."/>
            <person name="Weissman J.S."/>
            <person name="O'Shea E.K."/>
        </authorList>
    </citation>
    <scope>SUBCELLULAR LOCATION [LARGE SCALE ANALYSIS]</scope>
</reference>
<reference key="10">
    <citation type="journal article" date="2003" name="Nature">
        <title>Global analysis of protein expression in yeast.</title>
        <authorList>
            <person name="Ghaemmaghami S."/>
            <person name="Huh W.-K."/>
            <person name="Bower K."/>
            <person name="Howson R.W."/>
            <person name="Belle A."/>
            <person name="Dephoure N."/>
            <person name="O'Shea E.K."/>
            <person name="Weissman J.S."/>
        </authorList>
    </citation>
    <scope>LEVEL OF PROTEIN EXPRESSION [LARGE SCALE ANALYSIS]</scope>
</reference>
<reference key="11">
    <citation type="journal article" date="2004" name="Mol. Cell. Biol.">
        <title>The ribosome-bound chaperones RAC and Ssb1/2p are required for accurate translation in Saccharomyces cerevisiae.</title>
        <authorList>
            <person name="Rakwalska M."/>
            <person name="Rospert S."/>
        </authorList>
    </citation>
    <scope>FUNCTION</scope>
</reference>
<reference key="12">
    <citation type="journal article" date="2005" name="Nat. Struct. Mol. Biol.">
        <title>The Hsp70 Ssz1 modulates the function of the ribosome-associated J-protein Zuo1.</title>
        <authorList>
            <person name="Huang P."/>
            <person name="Gautschi M."/>
            <person name="Walter W."/>
            <person name="Rospert S."/>
            <person name="Craig E.A."/>
        </authorList>
    </citation>
    <scope>FUNCTION</scope>
</reference>
<reference key="13">
    <citation type="journal article" date="2007" name="J. Proteome Res.">
        <title>Large-scale phosphorylation analysis of alpha-factor-arrested Saccharomyces cerevisiae.</title>
        <authorList>
            <person name="Li X."/>
            <person name="Gerber S.A."/>
            <person name="Rudner A.D."/>
            <person name="Beausoleil S.A."/>
            <person name="Haas W."/>
            <person name="Villen J."/>
            <person name="Elias J.E."/>
            <person name="Gygi S.P."/>
        </authorList>
    </citation>
    <scope>PHOSPHORYLATION [LARGE SCALE ANALYSIS] AT SER-50</scope>
    <scope>IDENTIFICATION BY MASS SPECTROMETRY [LARGE SCALE ANALYSIS]</scope>
    <source>
        <strain>ADR376</strain>
    </source>
</reference>
<reference key="14">
    <citation type="journal article" date="2007" name="Proc. Natl. Acad. Sci. U.S.A.">
        <title>Analysis of phosphorylation sites on proteins from Saccharomyces cerevisiae by electron transfer dissociation (ETD) mass spectrometry.</title>
        <authorList>
            <person name="Chi A."/>
            <person name="Huttenhower C."/>
            <person name="Geer L.Y."/>
            <person name="Coon J.J."/>
            <person name="Syka J.E.P."/>
            <person name="Bai D.L."/>
            <person name="Shabanowitz J."/>
            <person name="Burke D.J."/>
            <person name="Troyanskaya O.G."/>
            <person name="Hunt D.F."/>
        </authorList>
    </citation>
    <scope>PHOSPHORYLATION [LARGE SCALE ANALYSIS] AT SER-50</scope>
    <scope>IDENTIFICATION BY MASS SPECTROMETRY [LARGE SCALE ANALYSIS]</scope>
</reference>
<reference key="15">
    <citation type="journal article" date="2008" name="Mol. Cell. Proteomics">
        <title>A multidimensional chromatography technology for in-depth phosphoproteome analysis.</title>
        <authorList>
            <person name="Albuquerque C.P."/>
            <person name="Smolka M.B."/>
            <person name="Payne S.H."/>
            <person name="Bafna V."/>
            <person name="Eng J."/>
            <person name="Zhou H."/>
        </authorList>
    </citation>
    <scope>IDENTIFICATION BY MASS SPECTROMETRY [LARGE SCALE ANALYSIS]</scope>
</reference>
<reference key="16">
    <citation type="journal article" date="2009" name="Science">
        <title>Global analysis of Cdk1 substrate phosphorylation sites provides insights into evolution.</title>
        <authorList>
            <person name="Holt L.J."/>
            <person name="Tuch B.B."/>
            <person name="Villen J."/>
            <person name="Johnson A.D."/>
            <person name="Gygi S.P."/>
            <person name="Morgan D.O."/>
        </authorList>
    </citation>
    <scope>PHOSPHORYLATION [LARGE SCALE ANALYSIS] AT SER-50</scope>
    <scope>IDENTIFICATION BY MASS SPECTROMETRY [LARGE SCALE ANALYSIS]</scope>
</reference>
<evidence type="ECO:0000255" key="1">
    <source>
        <dbReference type="PROSITE-ProRule" id="PRU00286"/>
    </source>
</evidence>
<evidence type="ECO:0000256" key="2">
    <source>
        <dbReference type="SAM" id="MobiDB-lite"/>
    </source>
</evidence>
<evidence type="ECO:0000269" key="3">
    <source>
    </source>
</evidence>
<evidence type="ECO:0000269" key="4">
    <source>
    </source>
</evidence>
<evidence type="ECO:0000269" key="5">
    <source>
    </source>
</evidence>
<evidence type="ECO:0000269" key="6">
    <source>
    </source>
</evidence>
<evidence type="ECO:0000269" key="7">
    <source>
    </source>
</evidence>
<evidence type="ECO:0000269" key="8">
    <source>
    </source>
</evidence>
<evidence type="ECO:0007744" key="9">
    <source>
    </source>
</evidence>
<evidence type="ECO:0007744" key="10">
    <source>
    </source>
</evidence>
<evidence type="ECO:0007744" key="11">
    <source>
    </source>
</evidence>
<evidence type="ECO:0007829" key="12">
    <source>
        <dbReference type="PDB" id="2LWX"/>
    </source>
</evidence>
<evidence type="ECO:0007829" key="13">
    <source>
        <dbReference type="PDB" id="5DJE"/>
    </source>
</evidence>
<evidence type="ECO:0007829" key="14">
    <source>
        <dbReference type="PDB" id="7X34"/>
    </source>
</evidence>
<sequence>MFSLPTLTSDITVEVNSSATKTPFVRRPVEPVGKFFLQHAQRTLRNHTWSEFERIEAEKNVKTVDESNVDPDELLFDTELADEDLLTHDARDWKTADLYAAMGLSKLRFRATESQIIKAHRKQVVKYHPDKQSAAGGSLDQDGFFKIIQKAFETLTDSNKRAQYDSCDFVADVPPPKKGTDYDFYEAWGPVFEAEARFSKKTPIPSLGNKDSSKKEVEQFYAFWHRFDSWRTFEFLDEDVPDDSSNRDHKRYIERKNKAARDKKKTADNARLVKLVERAVSEDPRIKMFKEEEKKEKERRKWEREAGARAEAEAKAKAEAEAKAKAESEAKANASAKADKKKAKEAAKAAKKKNKRAIRNSAKEADYFGDADKATTIDEQVGLIVDSLNDEELVSTADKIKANAAGAKEVLKESAKTIVDSGKLPSSLLSYFV</sequence>
<dbReference type="EMBL" id="X63612">
    <property type="protein sequence ID" value="CAA45156.1"/>
    <property type="molecule type" value="Genomic_DNA"/>
</dbReference>
<dbReference type="EMBL" id="Z73070">
    <property type="protein sequence ID" value="CAA97317.1"/>
    <property type="molecule type" value="Genomic_DNA"/>
</dbReference>
<dbReference type="EMBL" id="AY692823">
    <property type="protein sequence ID" value="AAT92842.1"/>
    <property type="molecule type" value="Genomic_DNA"/>
</dbReference>
<dbReference type="EMBL" id="BK006941">
    <property type="protein sequence ID" value="DAA08373.1"/>
    <property type="molecule type" value="Genomic_DNA"/>
</dbReference>
<dbReference type="PIR" id="S25194">
    <property type="entry name" value="S25194"/>
</dbReference>
<dbReference type="RefSeq" id="NP_011801.1">
    <property type="nucleotide sequence ID" value="NM_001181414.1"/>
</dbReference>
<dbReference type="PDB" id="2LWX">
    <property type="method" value="NMR"/>
    <property type="chains" value="A=348-433"/>
</dbReference>
<dbReference type="PDB" id="5DJE">
    <property type="method" value="X-ray"/>
    <property type="resolution" value="1.85 A"/>
    <property type="chains" value="A/B=166-303"/>
</dbReference>
<dbReference type="PDB" id="7X34">
    <property type="method" value="EM"/>
    <property type="resolution" value="3.10 A"/>
    <property type="chains" value="C=334-433"/>
</dbReference>
<dbReference type="PDB" id="7X3K">
    <property type="method" value="EM"/>
    <property type="resolution" value="6.00 A"/>
    <property type="chains" value="A=1-433"/>
</dbReference>
<dbReference type="PDBsum" id="2LWX"/>
<dbReference type="PDBsum" id="5DJE"/>
<dbReference type="PDBsum" id="7X34"/>
<dbReference type="PDBsum" id="7X3K"/>
<dbReference type="EMDB" id="EMD-32978"/>
<dbReference type="EMDB" id="EMD-32991"/>
<dbReference type="SMR" id="P32527"/>
<dbReference type="BioGRID" id="33535">
    <property type="interactions" value="282"/>
</dbReference>
<dbReference type="ComplexPortal" id="CPX-1743">
    <property type="entry name" value="Ribosome-associated complex"/>
</dbReference>
<dbReference type="DIP" id="DIP-4720N"/>
<dbReference type="FunCoup" id="P32527">
    <property type="interactions" value="173"/>
</dbReference>
<dbReference type="IntAct" id="P32527">
    <property type="interactions" value="98"/>
</dbReference>
<dbReference type="MINT" id="P32527"/>
<dbReference type="STRING" id="4932.YGR285C"/>
<dbReference type="MoonProt" id="P32527"/>
<dbReference type="iPTMnet" id="P32527"/>
<dbReference type="PaxDb" id="4932-YGR285C"/>
<dbReference type="PeptideAtlas" id="P32527"/>
<dbReference type="EnsemblFungi" id="YGR285C_mRNA">
    <property type="protein sequence ID" value="YGR285C"/>
    <property type="gene ID" value="YGR285C"/>
</dbReference>
<dbReference type="GeneID" id="853202"/>
<dbReference type="KEGG" id="sce:YGR285C"/>
<dbReference type="AGR" id="SGD:S000003517"/>
<dbReference type="SGD" id="S000003517">
    <property type="gene designation" value="ZUO1"/>
</dbReference>
<dbReference type="VEuPathDB" id="FungiDB:YGR285C"/>
<dbReference type="eggNOG" id="KOG0724">
    <property type="taxonomic scope" value="Eukaryota"/>
</dbReference>
<dbReference type="GeneTree" id="ENSGT00940000155441"/>
<dbReference type="HOGENOM" id="CLU_019916_1_0_1"/>
<dbReference type="InParanoid" id="P32527"/>
<dbReference type="OMA" id="RNHTWSE"/>
<dbReference type="OrthoDB" id="1690618at2759"/>
<dbReference type="BioCyc" id="YEAST:G3O-30947-MONOMER"/>
<dbReference type="Reactome" id="R-SCE-3371453">
    <property type="pathway name" value="Regulation of HSF1-mediated heat shock response"/>
</dbReference>
<dbReference type="BioGRID-ORCS" id="853202">
    <property type="hits" value="8 hits in 10 CRISPR screens"/>
</dbReference>
<dbReference type="CD-CODE" id="E03F929F">
    <property type="entry name" value="Stress granule"/>
</dbReference>
<dbReference type="EvolutionaryTrace" id="P32527"/>
<dbReference type="PRO" id="PR:P32527"/>
<dbReference type="Proteomes" id="UP000002311">
    <property type="component" value="Chromosome VII"/>
</dbReference>
<dbReference type="RNAct" id="P32527">
    <property type="molecule type" value="protein"/>
</dbReference>
<dbReference type="GO" id="GO:0005737">
    <property type="term" value="C:cytoplasm"/>
    <property type="evidence" value="ECO:0000314"/>
    <property type="project" value="SGD"/>
</dbReference>
<dbReference type="GO" id="GO:0005829">
    <property type="term" value="C:cytosol"/>
    <property type="evidence" value="ECO:0000318"/>
    <property type="project" value="GO_Central"/>
</dbReference>
<dbReference type="GO" id="GO:0005739">
    <property type="term" value="C:mitochondrion"/>
    <property type="evidence" value="ECO:0007005"/>
    <property type="project" value="SGD"/>
</dbReference>
<dbReference type="GO" id="GO:0005730">
    <property type="term" value="C:nucleolus"/>
    <property type="evidence" value="ECO:0000315"/>
    <property type="project" value="SGD"/>
</dbReference>
<dbReference type="GO" id="GO:0101031">
    <property type="term" value="C:protein folding chaperone complex"/>
    <property type="evidence" value="ECO:0000353"/>
    <property type="project" value="ComplexPortal"/>
</dbReference>
<dbReference type="GO" id="GO:0005840">
    <property type="term" value="C:ribosome"/>
    <property type="evidence" value="ECO:0000314"/>
    <property type="project" value="SGD"/>
</dbReference>
<dbReference type="GO" id="GO:0003677">
    <property type="term" value="F:DNA binding"/>
    <property type="evidence" value="ECO:0007669"/>
    <property type="project" value="UniProtKB-KW"/>
</dbReference>
<dbReference type="GO" id="GO:0030544">
    <property type="term" value="F:Hsp70 protein binding"/>
    <property type="evidence" value="ECO:0000318"/>
    <property type="project" value="GO_Central"/>
</dbReference>
<dbReference type="GO" id="GO:0043022">
    <property type="term" value="F:ribosome binding"/>
    <property type="evidence" value="ECO:0000314"/>
    <property type="project" value="SGD"/>
</dbReference>
<dbReference type="GO" id="GO:0003713">
    <property type="term" value="F:transcription coactivator activity"/>
    <property type="evidence" value="ECO:0000315"/>
    <property type="project" value="UniProtKB"/>
</dbReference>
<dbReference type="GO" id="GO:0051083">
    <property type="term" value="P:'de novo' cotranslational protein folding"/>
    <property type="evidence" value="ECO:0000314"/>
    <property type="project" value="ComplexPortal"/>
</dbReference>
<dbReference type="GO" id="GO:0035556">
    <property type="term" value="P:intracellular signal transduction"/>
    <property type="evidence" value="ECO:0000315"/>
    <property type="project" value="UniProtKB"/>
</dbReference>
<dbReference type="GO" id="GO:0006457">
    <property type="term" value="P:protein folding"/>
    <property type="evidence" value="ECO:0000303"/>
    <property type="project" value="ComplexPortal"/>
</dbReference>
<dbReference type="GO" id="GO:0006450">
    <property type="term" value="P:regulation of translational fidelity"/>
    <property type="evidence" value="ECO:0000314"/>
    <property type="project" value="ComplexPortal"/>
</dbReference>
<dbReference type="GO" id="GO:0000054">
    <property type="term" value="P:ribosomal subunit export from nucleus"/>
    <property type="evidence" value="ECO:0000315"/>
    <property type="project" value="SGD"/>
</dbReference>
<dbReference type="GO" id="GO:0006364">
    <property type="term" value="P:rRNA processing"/>
    <property type="evidence" value="ECO:0000315"/>
    <property type="project" value="SGD"/>
</dbReference>
<dbReference type="GO" id="GO:0006452">
    <property type="term" value="P:translational frameshifting"/>
    <property type="evidence" value="ECO:0000315"/>
    <property type="project" value="SGD"/>
</dbReference>
<dbReference type="CDD" id="cd06257">
    <property type="entry name" value="DnaJ"/>
    <property type="match status" value="1"/>
</dbReference>
<dbReference type="CDD" id="cd23953">
    <property type="entry name" value="zuotin_NTD"/>
    <property type="match status" value="1"/>
</dbReference>
<dbReference type="FunFam" id="1.10.8.840:FF:000002">
    <property type="entry name" value="Zuo1p"/>
    <property type="match status" value="1"/>
</dbReference>
<dbReference type="Gene3D" id="1.10.287.110">
    <property type="entry name" value="DnaJ domain"/>
    <property type="match status" value="1"/>
</dbReference>
<dbReference type="Gene3D" id="1.10.8.840">
    <property type="entry name" value="Ribosome-associated complex head domain"/>
    <property type="match status" value="1"/>
</dbReference>
<dbReference type="InterPro" id="IPR001623">
    <property type="entry name" value="DnaJ_domain"/>
</dbReference>
<dbReference type="InterPro" id="IPR018253">
    <property type="entry name" value="DnaJ_domain_CS"/>
</dbReference>
<dbReference type="InterPro" id="IPR036869">
    <property type="entry name" value="J_dom_sf"/>
</dbReference>
<dbReference type="InterPro" id="IPR032003">
    <property type="entry name" value="RAC_head"/>
</dbReference>
<dbReference type="InterPro" id="IPR042569">
    <property type="entry name" value="RAC_head_sf"/>
</dbReference>
<dbReference type="InterPro" id="IPR054076">
    <property type="entry name" value="ZUO1-like_ZHD"/>
</dbReference>
<dbReference type="InterPro" id="IPR044634">
    <property type="entry name" value="Zuotin/DnaJC2"/>
</dbReference>
<dbReference type="PANTHER" id="PTHR43999">
    <property type="entry name" value="DNAJ HOMOLOG SUBFAMILY C MEMBER 2"/>
    <property type="match status" value="1"/>
</dbReference>
<dbReference type="PANTHER" id="PTHR43999:SF1">
    <property type="entry name" value="DNAJ HOMOLOG SUBFAMILY C MEMBER 2"/>
    <property type="match status" value="1"/>
</dbReference>
<dbReference type="Pfam" id="PF00226">
    <property type="entry name" value="DnaJ"/>
    <property type="match status" value="1"/>
</dbReference>
<dbReference type="Pfam" id="PF16717">
    <property type="entry name" value="RAC_head"/>
    <property type="match status" value="1"/>
</dbReference>
<dbReference type="Pfam" id="PF21884">
    <property type="entry name" value="ZUO1-like_ZHD"/>
    <property type="match status" value="1"/>
</dbReference>
<dbReference type="SMART" id="SM00271">
    <property type="entry name" value="DnaJ"/>
    <property type="match status" value="1"/>
</dbReference>
<dbReference type="SUPFAM" id="SSF46565">
    <property type="entry name" value="Chaperone J-domain"/>
    <property type="match status" value="1"/>
</dbReference>
<dbReference type="PROSITE" id="PS00636">
    <property type="entry name" value="DNAJ_1"/>
    <property type="match status" value="1"/>
</dbReference>
<dbReference type="PROSITE" id="PS50076">
    <property type="entry name" value="DNAJ_2"/>
    <property type="match status" value="1"/>
</dbReference>
<feature type="chain" id="PRO_0000071122" description="Zuotin">
    <location>
        <begin position="1"/>
        <end position="433"/>
    </location>
</feature>
<feature type="domain" description="J" evidence="1">
    <location>
        <begin position="98"/>
        <end position="170"/>
    </location>
</feature>
<feature type="region of interest" description="Disordered" evidence="2">
    <location>
        <begin position="292"/>
        <end position="357"/>
    </location>
</feature>
<feature type="compositionally biased region" description="Basic and acidic residues" evidence="2">
    <location>
        <begin position="292"/>
        <end position="330"/>
    </location>
</feature>
<feature type="modified residue" description="Phosphoserine" evidence="9 10 11">
    <location>
        <position position="50"/>
    </location>
</feature>
<feature type="mutagenesis site" description="Loss of function, but still forms a heterodimer with SSZ1 and associates with ribosomes." evidence="4">
    <original>H</original>
    <variation>Q</variation>
    <location>
        <position position="128"/>
    </location>
</feature>
<feature type="helix" evidence="13">
    <location>
        <begin position="184"/>
        <end position="196"/>
    </location>
</feature>
<feature type="strand" evidence="13">
    <location>
        <begin position="199"/>
        <end position="203"/>
    </location>
</feature>
<feature type="helix" evidence="13">
    <location>
        <begin position="214"/>
        <end position="225"/>
    </location>
</feature>
<feature type="helix" evidence="13">
    <location>
        <begin position="234"/>
        <end position="236"/>
    </location>
</feature>
<feature type="helix" evidence="13">
    <location>
        <begin position="249"/>
        <end position="282"/>
    </location>
</feature>
<feature type="helix" evidence="13">
    <location>
        <begin position="284"/>
        <end position="300"/>
    </location>
</feature>
<feature type="helix" evidence="14">
    <location>
        <begin position="335"/>
        <end position="364"/>
    </location>
</feature>
<feature type="helix" evidence="12">
    <location>
        <begin position="371"/>
        <end position="373"/>
    </location>
</feature>
<feature type="helix" evidence="14">
    <location>
        <begin position="374"/>
        <end position="386"/>
    </location>
</feature>
<feature type="helix" evidence="14">
    <location>
        <begin position="390"/>
        <end position="402"/>
    </location>
</feature>
<feature type="helix" evidence="12">
    <location>
        <begin position="404"/>
        <end position="407"/>
    </location>
</feature>
<feature type="helix" evidence="14">
    <location>
        <begin position="408"/>
        <end position="420"/>
    </location>
</feature>
<feature type="turn" evidence="14">
    <location>
        <begin position="426"/>
        <end position="432"/>
    </location>
</feature>
<name>ZUO1_YEAST</name>
<protein>
    <recommendedName>
        <fullName>Zuotin</fullName>
    </recommendedName>
    <alternativeName>
        <fullName>DnaJ-related protein ZUO1</fullName>
        <shortName>J protein ZUO1</shortName>
    </alternativeName>
    <alternativeName>
        <fullName>Heat shock protein 40 homolog ZUO1</fullName>
    </alternativeName>
    <alternativeName>
        <fullName>Ribosome-associated complex subunit ZUO1</fullName>
    </alternativeName>
</protein>
<organism>
    <name type="scientific">Saccharomyces cerevisiae (strain ATCC 204508 / S288c)</name>
    <name type="common">Baker's yeast</name>
    <dbReference type="NCBI Taxonomy" id="559292"/>
    <lineage>
        <taxon>Eukaryota</taxon>
        <taxon>Fungi</taxon>
        <taxon>Dikarya</taxon>
        <taxon>Ascomycota</taxon>
        <taxon>Saccharomycotina</taxon>
        <taxon>Saccharomycetes</taxon>
        <taxon>Saccharomycetales</taxon>
        <taxon>Saccharomycetaceae</taxon>
        <taxon>Saccharomyces</taxon>
    </lineage>
</organism>
<gene>
    <name type="primary">ZUO1</name>
    <name type="ordered locus">YGR285C</name>
</gene>